<name>HECA_DROME</name>
<keyword id="KW-0963">Cytoplasm</keyword>
<keyword id="KW-0217">Developmental protein</keyword>
<keyword id="KW-1185">Reference proteome</keyword>
<dbReference type="EMBL" id="Z50097">
    <property type="protein sequence ID" value="CAA90425.1"/>
    <property type="molecule type" value="mRNA"/>
</dbReference>
<dbReference type="EMBL" id="Z50097">
    <property type="protein sequence ID" value="CAB58233.1"/>
    <property type="molecule type" value="mRNA"/>
</dbReference>
<dbReference type="EMBL" id="AE014297">
    <property type="protein sequence ID" value="AAF57033.1"/>
    <property type="molecule type" value="Genomic_DNA"/>
</dbReference>
<dbReference type="EMBL" id="AE014297">
    <property type="protein sequence ID" value="AAO41615.1"/>
    <property type="molecule type" value="Genomic_DNA"/>
</dbReference>
<dbReference type="EMBL" id="AY060431">
    <property type="protein sequence ID" value="AAL25470.1"/>
    <property type="molecule type" value="mRNA"/>
</dbReference>
<dbReference type="RefSeq" id="NP_001263103.1">
    <property type="nucleotide sequence ID" value="NM_001276174.1"/>
</dbReference>
<dbReference type="RefSeq" id="NP_524592.2">
    <property type="nucleotide sequence ID" value="NM_079853.4"/>
</dbReference>
<dbReference type="RefSeq" id="NP_788768.1">
    <property type="nucleotide sequence ID" value="NM_176591.3"/>
</dbReference>
<dbReference type="BioGRID" id="68460">
    <property type="interactions" value="15"/>
</dbReference>
<dbReference type="FunCoup" id="Q9N2M8">
    <property type="interactions" value="616"/>
</dbReference>
<dbReference type="IntAct" id="Q9N2M8">
    <property type="interactions" value="7"/>
</dbReference>
<dbReference type="STRING" id="7227.FBpp0084985"/>
<dbReference type="GlyGen" id="Q9N2M8">
    <property type="glycosylation" value="1 site"/>
</dbReference>
<dbReference type="PaxDb" id="7227-FBpp0303343"/>
<dbReference type="DNASU" id="43604"/>
<dbReference type="EnsemblMetazoa" id="FBtr0085621">
    <property type="protein sequence ID" value="FBpp0084985"/>
    <property type="gene ID" value="FBgn0010113"/>
</dbReference>
<dbReference type="GeneID" id="43604"/>
<dbReference type="KEGG" id="dme:Dmel_CG15532"/>
<dbReference type="UCSC" id="CG15532-RA">
    <property type="organism name" value="d. melanogaster"/>
</dbReference>
<dbReference type="AGR" id="FB:FBgn0010113"/>
<dbReference type="CTD" id="51696"/>
<dbReference type="FlyBase" id="FBgn0010113">
    <property type="gene designation" value="heca"/>
</dbReference>
<dbReference type="VEuPathDB" id="VectorBase:FBgn0010113"/>
<dbReference type="eggNOG" id="KOG3816">
    <property type="taxonomic scope" value="Eukaryota"/>
</dbReference>
<dbReference type="GeneTree" id="ENSGT00500000044928"/>
<dbReference type="HOGENOM" id="CLU_278766_0_0_1"/>
<dbReference type="InParanoid" id="Q9N2M8"/>
<dbReference type="OrthoDB" id="10012848at2759"/>
<dbReference type="PhylomeDB" id="Q9N2M8"/>
<dbReference type="BioGRID-ORCS" id="43604">
    <property type="hits" value="0 hits in 3 CRISPR screens"/>
</dbReference>
<dbReference type="ChiTaRS" id="Hdc">
    <property type="organism name" value="fly"/>
</dbReference>
<dbReference type="GenomeRNAi" id="43604"/>
<dbReference type="PRO" id="PR:Q9N2M8"/>
<dbReference type="Proteomes" id="UP000000803">
    <property type="component" value="Chromosome 3R"/>
</dbReference>
<dbReference type="Bgee" id="FBgn0010113">
    <property type="expression patterns" value="Expressed in escort cell (Drosophila) in ovary and 295 other cell types or tissues"/>
</dbReference>
<dbReference type="ExpressionAtlas" id="Q9N2M8">
    <property type="expression patterns" value="baseline and differential"/>
</dbReference>
<dbReference type="GO" id="GO:0030424">
    <property type="term" value="C:axon"/>
    <property type="evidence" value="ECO:0000314"/>
    <property type="project" value="FlyBase"/>
</dbReference>
<dbReference type="GO" id="GO:0005737">
    <property type="term" value="C:cytoplasm"/>
    <property type="evidence" value="ECO:0000314"/>
    <property type="project" value="UniProtKB"/>
</dbReference>
<dbReference type="GO" id="GO:0030425">
    <property type="term" value="C:dendrite"/>
    <property type="evidence" value="ECO:0000314"/>
    <property type="project" value="FlyBase"/>
</dbReference>
<dbReference type="GO" id="GO:0048471">
    <property type="term" value="C:perinuclear region of cytoplasm"/>
    <property type="evidence" value="ECO:0000314"/>
    <property type="project" value="FlyBase"/>
</dbReference>
<dbReference type="GO" id="GO:0048102">
    <property type="term" value="P:autophagic cell death"/>
    <property type="evidence" value="ECO:0000315"/>
    <property type="project" value="FlyBase"/>
</dbReference>
<dbReference type="GO" id="GO:0002165">
    <property type="term" value="P:instar larval or pupal development"/>
    <property type="evidence" value="ECO:0000315"/>
    <property type="project" value="UniProtKB"/>
</dbReference>
<dbReference type="GO" id="GO:0050768">
    <property type="term" value="P:negative regulation of neurogenesis"/>
    <property type="evidence" value="ECO:0000315"/>
    <property type="project" value="FlyBase"/>
</dbReference>
<dbReference type="GO" id="GO:1904799">
    <property type="term" value="P:regulation of neuron remodeling"/>
    <property type="evidence" value="ECO:0000315"/>
    <property type="project" value="FlyBase"/>
</dbReference>
<dbReference type="GO" id="GO:0035194">
    <property type="term" value="P:regulatory ncRNA-mediated post-transcriptional gene silencing"/>
    <property type="evidence" value="ECO:0000315"/>
    <property type="project" value="FlyBase"/>
</dbReference>
<dbReference type="GO" id="GO:0007430">
    <property type="term" value="P:terminal branching, open tracheal system"/>
    <property type="evidence" value="ECO:0000315"/>
    <property type="project" value="UniProtKB"/>
</dbReference>
<dbReference type="InterPro" id="IPR026066">
    <property type="entry name" value="Headcase"/>
</dbReference>
<dbReference type="InterPro" id="IPR031947">
    <property type="entry name" value="Headcase_mid"/>
</dbReference>
<dbReference type="InterPro" id="IPR054537">
    <property type="entry name" value="HECA_N"/>
</dbReference>
<dbReference type="PANTHER" id="PTHR13425">
    <property type="entry name" value="HEADCASE PROTEIN"/>
    <property type="match status" value="1"/>
</dbReference>
<dbReference type="PANTHER" id="PTHR13425:SF3">
    <property type="entry name" value="HEADCASE PROTEIN HOMOLOG"/>
    <property type="match status" value="1"/>
</dbReference>
<dbReference type="Pfam" id="PF16002">
    <property type="entry name" value="Headcase"/>
    <property type="match status" value="1"/>
</dbReference>
<dbReference type="Pfam" id="PF15353">
    <property type="entry name" value="HECA_N"/>
    <property type="match status" value="1"/>
</dbReference>
<proteinExistence type="evidence at protein level"/>
<organism>
    <name type="scientific">Drosophila melanogaster</name>
    <name type="common">Fruit fly</name>
    <dbReference type="NCBI Taxonomy" id="7227"/>
    <lineage>
        <taxon>Eukaryota</taxon>
        <taxon>Metazoa</taxon>
        <taxon>Ecdysozoa</taxon>
        <taxon>Arthropoda</taxon>
        <taxon>Hexapoda</taxon>
        <taxon>Insecta</taxon>
        <taxon>Pterygota</taxon>
        <taxon>Neoptera</taxon>
        <taxon>Endopterygota</taxon>
        <taxon>Diptera</taxon>
        <taxon>Brachycera</taxon>
        <taxon>Muscomorpha</taxon>
        <taxon>Ephydroidea</taxon>
        <taxon>Drosophilidae</taxon>
        <taxon>Drosophila</taxon>
        <taxon>Sophophora</taxon>
    </lineage>
</organism>
<feature type="chain" id="PRO_0000021402" description="Headcase protein">
    <location>
        <begin position="1"/>
        <end position="1080"/>
    </location>
</feature>
<feature type="chain" id="PRO_0000021403" description="Headcase short protein">
    <location>
        <begin position="1"/>
        <end position="650"/>
    </location>
</feature>
<feature type="region of interest" description="Disordered" evidence="1">
    <location>
        <begin position="1"/>
        <end position="27"/>
    </location>
</feature>
<feature type="region of interest" description="Disordered" evidence="1">
    <location>
        <begin position="181"/>
        <end position="277"/>
    </location>
</feature>
<feature type="region of interest" description="Disordered" evidence="1">
    <location>
        <begin position="310"/>
        <end position="335"/>
    </location>
</feature>
<feature type="region of interest" description="Disordered" evidence="1">
    <location>
        <begin position="655"/>
        <end position="693"/>
    </location>
</feature>
<feature type="region of interest" description="Disordered" evidence="1">
    <location>
        <begin position="798"/>
        <end position="826"/>
    </location>
</feature>
<feature type="region of interest" description="Disordered" evidence="1">
    <location>
        <begin position="891"/>
        <end position="916"/>
    </location>
</feature>
<feature type="region of interest" description="Disordered" evidence="1">
    <location>
        <begin position="940"/>
        <end position="974"/>
    </location>
</feature>
<feature type="compositionally biased region" description="Polar residues" evidence="1">
    <location>
        <begin position="181"/>
        <end position="197"/>
    </location>
</feature>
<feature type="compositionally biased region" description="Gly residues" evidence="1">
    <location>
        <begin position="218"/>
        <end position="228"/>
    </location>
</feature>
<feature type="compositionally biased region" description="Polar residues" evidence="1">
    <location>
        <begin position="232"/>
        <end position="251"/>
    </location>
</feature>
<feature type="compositionally biased region" description="Low complexity" evidence="1">
    <location>
        <begin position="263"/>
        <end position="277"/>
    </location>
</feature>
<feature type="compositionally biased region" description="Polar residues" evidence="1">
    <location>
        <begin position="663"/>
        <end position="688"/>
    </location>
</feature>
<feature type="compositionally biased region" description="Low complexity" evidence="1">
    <location>
        <begin position="801"/>
        <end position="826"/>
    </location>
</feature>
<feature type="compositionally biased region" description="Polar residues" evidence="1">
    <location>
        <begin position="900"/>
        <end position="913"/>
    </location>
</feature>
<feature type="compositionally biased region" description="Low complexity" evidence="1">
    <location>
        <begin position="941"/>
        <end position="974"/>
    </location>
</feature>
<feature type="sequence conflict" description="In Ref. 1; CAA90425/CAB58233." evidence="5" ref="1">
    <original>H</original>
    <variation>P</variation>
    <location>
        <position position="85"/>
    </location>
</feature>
<feature type="sequence conflict" description="In Ref. 1; CAA90425/CAB58233." evidence="5" ref="1">
    <original>PT</original>
    <variation>SN</variation>
    <location>
        <begin position="190"/>
        <end position="191"/>
    </location>
</feature>
<feature type="sequence conflict" description="In Ref. 1; CAA90425/CAB58233." evidence="5" ref="1">
    <original>A</original>
    <variation>G</variation>
    <location>
        <position position="226"/>
    </location>
</feature>
<feature type="sequence conflict" description="In Ref. 1; CAA90425/CAB58233." evidence="5" ref="1">
    <original>SY</original>
    <variation>HD</variation>
    <location>
        <begin position="243"/>
        <end position="244"/>
    </location>
</feature>
<feature type="sequence conflict" description="In Ref. 1; CAA90425." evidence="5" ref="1">
    <original>SGVLQTSALATFSNILNTNNVLGLDLRARAGS</original>
    <variation>PACCRPVRWPLSATSSIRTMSWPGPARQGWQ</variation>
    <location>
        <begin position="279"/>
        <end position="310"/>
    </location>
</feature>
<feature type="sequence conflict" description="In Ref. 1; CAA90425/CAB58233." evidence="5" ref="1">
    <original>P</original>
    <variation>A</variation>
    <location>
        <position position="342"/>
    </location>
</feature>
<feature type="sequence conflict" description="In Ref. 1; CAA90425/CAB58233." evidence="5" ref="1">
    <original>L</original>
    <variation>V</variation>
    <location>
        <position position="353"/>
    </location>
</feature>
<feature type="sequence conflict" description="In Ref. 1; CAA90425/CAB58233." evidence="5" ref="1">
    <original>Q</original>
    <variation>P</variation>
    <location>
        <position position="383"/>
    </location>
</feature>
<feature type="sequence conflict" description="In Ref. 1; CAA90425/CAB58233." evidence="5" ref="1">
    <original>D</original>
    <variation>E</variation>
    <location>
        <position position="432"/>
    </location>
</feature>
<feature type="sequence conflict" description="In Ref. 1; CAA90425/CAB58233." evidence="5" ref="1">
    <original>T</original>
    <variation>S</variation>
    <location>
        <position position="641"/>
    </location>
</feature>
<feature type="sequence conflict" description="In Ref. 1; CAB58233." evidence="5" ref="1">
    <original>P</original>
    <variation>Q</variation>
    <location>
        <position position="695"/>
    </location>
</feature>
<feature type="sequence conflict" description="In Ref. 1; CAB58233." evidence="5" ref="1">
    <original>S</original>
    <variation>SS</variation>
    <location>
        <position position="852"/>
    </location>
</feature>
<feature type="sequence conflict" description="In Ref. 1; CAB58233." evidence="5" ref="1">
    <original>A</original>
    <variation>R</variation>
    <location>
        <position position="1067"/>
    </location>
</feature>
<gene>
    <name evidence="6" type="primary">heca</name>
    <name evidence="4" type="synonym">hdc</name>
    <name evidence="6" type="ORF">CG15532</name>
</gene>
<sequence length="1080" mass="117448">MAPRRNSNISSSGNSTQQQHQQQLQQQHQTQQHQLLQFYAENVNSSGVLMAPMQGTGGVGGVGGGGMVHCCLPSGDCRKLDTLIHLNELSLADCIRVLCNNENCSAGQYMHRECFEWWEASVLQALKANGRARSWSERQRLQHLWTKKGYELVQKACSCKCGRGQLRKDLDWVPPSSQGVIYLNGSGNRPTLANGSLSEDDDKKKAKKKRNRNNNNNNGGGGGGGAGVNGNTKTPLSNNNGNSYAGLTPNPNVGVIGSGLPHNNGNTASNGSSGNNGSSGVLQTSALATFSNILNTNNVLGLDLRARAGSLSSSGAGSGSTSPSDSQSSGEISVSPVQQLLPQQQQQQQQSLLIQPLGPAFGSNLLQNGLGLSKNLLIAPQQQQQQQLQQQQQQQNNLPALANISNFKPLASYEQQQLVQQQKNKEVELYSDRVRSTSGCNGIFSRRLDFSSFNLLPKTRLNSYQVKIEDEGNHGNDETRLFILSSLAQSQMSRVACILCEEPLLVFDRYPLVDGSFFLSPKQHSSGCIEVKYEGRTLYLTCVCMSCLDGTSSSRAINCRFCKEPWDGSSLVLGTMYAYDIFAAMPCCAERFKCNNCFKMLMHPQQRLSFYSDYSHGVTCPYCNTQDTHFVKPLTFCYAKTTATRLPTLAXHEAPLESPVGTGATTTQVPNAQGSPTASGCSSNTIASKQPPKQPLYNAAIDYSAPLQQQINPDLIGAHPHAQQHQQQVRQQQQQQQQQQPQQQQQQQQQQTQQQQSQQQQQQQQQQHQPVVSTFQRGNFPQQSHKTMNMMAMADVMSKYQQQQHQQQQQQRQQQHNLQPQQQHATQKGLEGLLLTNTNTSNNNSSSSSSSSISNLIISHNSASNTGNKMQPTWGQSDAISALWGCSSSSSGCSSGSGSQPSLSPTASSNGNDGSKMMLWAAQSSPQNAATLRDGFKELQRQQPPQQQVPQQQPHAASPTASLTSSSSSSNGWSASHYGKPNIWELPGSTGQRTPASSHDIFTDLLCNLSISQDNSSQQASSKADASDVSSNSSSSAGELLEAANIWRFPEYASSQLYMEEPTGGAAACMQLFNDYLNMN</sequence>
<protein>
    <recommendedName>
        <fullName evidence="4">Headcase protein</fullName>
    </recommendedName>
    <component>
        <recommendedName>
            <fullName evidence="5">Headcase short protein</fullName>
        </recommendedName>
    </component>
</protein>
<comment type="function">
    <text evidence="2 3">Required for imaginal cell differentiation, may be involved in hormonal responsiveness during metamorphosis. Involved in an inhibitory signaling mechanism to determine the number of cells that will form unicellular sprouts in the trachea. Regulated by transcription factor esg. The longer hdc protein is completely functional and the shorter protein carries some function.</text>
</comment>
<comment type="interaction">
    <interactant intactId="EBI-97141">
        <id>Q9N2M8</id>
    </interactant>
    <interactant intactId="EBI-90517">
        <id>Q86B79</id>
        <label>unk</label>
    </interactant>
    <organismsDiffer>false</organismsDiffer>
    <experiments>4</experiments>
</comment>
<comment type="subcellular location">
    <subcellularLocation>
        <location>Cytoplasm</location>
    </subcellularLocation>
</comment>
<comment type="tissue specificity">
    <text evidence="2 3">Expressed in all imaginal cells of the embryo and larvae. Expressed in a subset of tracheal fusion cells from stage 14 to the end of embryogenesis in metameres 2-9, lateral trunk and ventral anastomoses.</text>
</comment>
<comment type="miscellaneous">
    <text>Readthrough of the terminator UAA occurs between codons for Ala-650 and His-652. Readthrough is not always suppressed as the shorter protein is more abundant.</text>
</comment>
<reference key="1">
    <citation type="journal article" date="1995" name="Development">
        <title>Headcase, an imaginal specific gene required for adult morphogenesis in Drosophila melanogaster.</title>
        <authorList>
            <person name="Weaver T.A."/>
            <person name="White R.A."/>
        </authorList>
    </citation>
    <scope>NUCLEOTIDE SEQUENCE [MRNA]</scope>
    <scope>FUNCTION</scope>
    <scope>TISSUE SPECIFICITY</scope>
    <source>
        <tissue>Embryo</tissue>
    </source>
</reference>
<reference key="2">
    <citation type="journal article" date="2000" name="Science">
        <title>The genome sequence of Drosophila melanogaster.</title>
        <authorList>
            <person name="Adams M.D."/>
            <person name="Celniker S.E."/>
            <person name="Holt R.A."/>
            <person name="Evans C.A."/>
            <person name="Gocayne J.D."/>
            <person name="Amanatides P.G."/>
            <person name="Scherer S.E."/>
            <person name="Li P.W."/>
            <person name="Hoskins R.A."/>
            <person name="Galle R.F."/>
            <person name="George R.A."/>
            <person name="Lewis S.E."/>
            <person name="Richards S."/>
            <person name="Ashburner M."/>
            <person name="Henderson S.N."/>
            <person name="Sutton G.G."/>
            <person name="Wortman J.R."/>
            <person name="Yandell M.D."/>
            <person name="Zhang Q."/>
            <person name="Chen L.X."/>
            <person name="Brandon R.C."/>
            <person name="Rogers Y.-H.C."/>
            <person name="Blazej R.G."/>
            <person name="Champe M."/>
            <person name="Pfeiffer B.D."/>
            <person name="Wan K.H."/>
            <person name="Doyle C."/>
            <person name="Baxter E.G."/>
            <person name="Helt G."/>
            <person name="Nelson C.R."/>
            <person name="Miklos G.L.G."/>
            <person name="Abril J.F."/>
            <person name="Agbayani A."/>
            <person name="An H.-J."/>
            <person name="Andrews-Pfannkoch C."/>
            <person name="Baldwin D."/>
            <person name="Ballew R.M."/>
            <person name="Basu A."/>
            <person name="Baxendale J."/>
            <person name="Bayraktaroglu L."/>
            <person name="Beasley E.M."/>
            <person name="Beeson K.Y."/>
            <person name="Benos P.V."/>
            <person name="Berman B.P."/>
            <person name="Bhandari D."/>
            <person name="Bolshakov S."/>
            <person name="Borkova D."/>
            <person name="Botchan M.R."/>
            <person name="Bouck J."/>
            <person name="Brokstein P."/>
            <person name="Brottier P."/>
            <person name="Burtis K.C."/>
            <person name="Busam D.A."/>
            <person name="Butler H."/>
            <person name="Cadieu E."/>
            <person name="Center A."/>
            <person name="Chandra I."/>
            <person name="Cherry J.M."/>
            <person name="Cawley S."/>
            <person name="Dahlke C."/>
            <person name="Davenport L.B."/>
            <person name="Davies P."/>
            <person name="de Pablos B."/>
            <person name="Delcher A."/>
            <person name="Deng Z."/>
            <person name="Mays A.D."/>
            <person name="Dew I."/>
            <person name="Dietz S.M."/>
            <person name="Dodson K."/>
            <person name="Doup L.E."/>
            <person name="Downes M."/>
            <person name="Dugan-Rocha S."/>
            <person name="Dunkov B.C."/>
            <person name="Dunn P."/>
            <person name="Durbin K.J."/>
            <person name="Evangelista C.C."/>
            <person name="Ferraz C."/>
            <person name="Ferriera S."/>
            <person name="Fleischmann W."/>
            <person name="Fosler C."/>
            <person name="Gabrielian A.E."/>
            <person name="Garg N.S."/>
            <person name="Gelbart W.M."/>
            <person name="Glasser K."/>
            <person name="Glodek A."/>
            <person name="Gong F."/>
            <person name="Gorrell J.H."/>
            <person name="Gu Z."/>
            <person name="Guan P."/>
            <person name="Harris M."/>
            <person name="Harris N.L."/>
            <person name="Harvey D.A."/>
            <person name="Heiman T.J."/>
            <person name="Hernandez J.R."/>
            <person name="Houck J."/>
            <person name="Hostin D."/>
            <person name="Houston K.A."/>
            <person name="Howland T.J."/>
            <person name="Wei M.-H."/>
            <person name="Ibegwam C."/>
            <person name="Jalali M."/>
            <person name="Kalush F."/>
            <person name="Karpen G.H."/>
            <person name="Ke Z."/>
            <person name="Kennison J.A."/>
            <person name="Ketchum K.A."/>
            <person name="Kimmel B.E."/>
            <person name="Kodira C.D."/>
            <person name="Kraft C.L."/>
            <person name="Kravitz S."/>
            <person name="Kulp D."/>
            <person name="Lai Z."/>
            <person name="Lasko P."/>
            <person name="Lei Y."/>
            <person name="Levitsky A.A."/>
            <person name="Li J.H."/>
            <person name="Li Z."/>
            <person name="Liang Y."/>
            <person name="Lin X."/>
            <person name="Liu X."/>
            <person name="Mattei B."/>
            <person name="McIntosh T.C."/>
            <person name="McLeod M.P."/>
            <person name="McPherson D."/>
            <person name="Merkulov G."/>
            <person name="Milshina N.V."/>
            <person name="Mobarry C."/>
            <person name="Morris J."/>
            <person name="Moshrefi A."/>
            <person name="Mount S.M."/>
            <person name="Moy M."/>
            <person name="Murphy B."/>
            <person name="Murphy L."/>
            <person name="Muzny D.M."/>
            <person name="Nelson D.L."/>
            <person name="Nelson D.R."/>
            <person name="Nelson K.A."/>
            <person name="Nixon K."/>
            <person name="Nusskern D.R."/>
            <person name="Pacleb J.M."/>
            <person name="Palazzolo M."/>
            <person name="Pittman G.S."/>
            <person name="Pan S."/>
            <person name="Pollard J."/>
            <person name="Puri V."/>
            <person name="Reese M.G."/>
            <person name="Reinert K."/>
            <person name="Remington K."/>
            <person name="Saunders R.D.C."/>
            <person name="Scheeler F."/>
            <person name="Shen H."/>
            <person name="Shue B.C."/>
            <person name="Siden-Kiamos I."/>
            <person name="Simpson M."/>
            <person name="Skupski M.P."/>
            <person name="Smith T.J."/>
            <person name="Spier E."/>
            <person name="Spradling A.C."/>
            <person name="Stapleton M."/>
            <person name="Strong R."/>
            <person name="Sun E."/>
            <person name="Svirskas R."/>
            <person name="Tector C."/>
            <person name="Turner R."/>
            <person name="Venter E."/>
            <person name="Wang A.H."/>
            <person name="Wang X."/>
            <person name="Wang Z.-Y."/>
            <person name="Wassarman D.A."/>
            <person name="Weinstock G.M."/>
            <person name="Weissenbach J."/>
            <person name="Williams S.M."/>
            <person name="Woodage T."/>
            <person name="Worley K.C."/>
            <person name="Wu D."/>
            <person name="Yang S."/>
            <person name="Yao Q.A."/>
            <person name="Ye J."/>
            <person name="Yeh R.-F."/>
            <person name="Zaveri J.S."/>
            <person name="Zhan M."/>
            <person name="Zhang G."/>
            <person name="Zhao Q."/>
            <person name="Zheng L."/>
            <person name="Zheng X.H."/>
            <person name="Zhong F.N."/>
            <person name="Zhong W."/>
            <person name="Zhou X."/>
            <person name="Zhu S.C."/>
            <person name="Zhu X."/>
            <person name="Smith H.O."/>
            <person name="Gibbs R.A."/>
            <person name="Myers E.W."/>
            <person name="Rubin G.M."/>
            <person name="Venter J.C."/>
        </authorList>
    </citation>
    <scope>NUCLEOTIDE SEQUENCE [LARGE SCALE GENOMIC DNA]</scope>
    <source>
        <strain>Berkeley</strain>
    </source>
</reference>
<reference key="3">
    <citation type="journal article" date="2002" name="Genome Biol.">
        <title>Annotation of the Drosophila melanogaster euchromatic genome: a systematic review.</title>
        <authorList>
            <person name="Misra S."/>
            <person name="Crosby M.A."/>
            <person name="Mungall C.J."/>
            <person name="Matthews B.B."/>
            <person name="Campbell K.S."/>
            <person name="Hradecky P."/>
            <person name="Huang Y."/>
            <person name="Kaminker J.S."/>
            <person name="Millburn G.H."/>
            <person name="Prochnik S.E."/>
            <person name="Smith C.D."/>
            <person name="Tupy J.L."/>
            <person name="Whitfield E.J."/>
            <person name="Bayraktaroglu L."/>
            <person name="Berman B.P."/>
            <person name="Bettencourt B.R."/>
            <person name="Celniker S.E."/>
            <person name="de Grey A.D.N.J."/>
            <person name="Drysdale R.A."/>
            <person name="Harris N.L."/>
            <person name="Richter J."/>
            <person name="Russo S."/>
            <person name="Schroeder A.J."/>
            <person name="Shu S.Q."/>
            <person name="Stapleton M."/>
            <person name="Yamada C."/>
            <person name="Ashburner M."/>
            <person name="Gelbart W.M."/>
            <person name="Rubin G.M."/>
            <person name="Lewis S.E."/>
        </authorList>
    </citation>
    <scope>GENOME REANNOTATION</scope>
    <source>
        <strain>Berkeley</strain>
    </source>
</reference>
<reference key="4">
    <citation type="journal article" date="2002" name="Genome Biol.">
        <title>A Drosophila full-length cDNA resource.</title>
        <authorList>
            <person name="Stapleton M."/>
            <person name="Carlson J.W."/>
            <person name="Brokstein P."/>
            <person name="Yu C."/>
            <person name="Champe M."/>
            <person name="George R.A."/>
            <person name="Guarin H."/>
            <person name="Kronmiller B."/>
            <person name="Pacleb J.M."/>
            <person name="Park S."/>
            <person name="Wan K.H."/>
            <person name="Rubin G.M."/>
            <person name="Celniker S.E."/>
        </authorList>
    </citation>
    <scope>NUCLEOTIDE SEQUENCE [LARGE SCALE MRNA]</scope>
    <source>
        <strain>Berkeley</strain>
        <tissue>Embryo</tissue>
    </source>
</reference>
<reference key="5">
    <citation type="journal article" date="1998" name="Genes Dev.">
        <title>Translational readthrough in the hdc mRNA generates a novel branching inhibitor in the Drosophila trachea.</title>
        <authorList>
            <person name="Steneberg P."/>
            <person name="Englund C."/>
            <person name="Kronhamn J."/>
            <person name="Weaver T.A."/>
            <person name="Samakovlis C."/>
        </authorList>
    </citation>
    <scope>PARTIAL NUCLEOTIDE SEQUENCE</scope>
    <scope>FUNCTION</scope>
    <scope>TISSUE SPECIFICITY</scope>
    <source>
        <tissue>Embryo</tissue>
    </source>
</reference>
<evidence type="ECO:0000256" key="1">
    <source>
        <dbReference type="SAM" id="MobiDB-lite"/>
    </source>
</evidence>
<evidence type="ECO:0000269" key="2">
    <source>
    </source>
</evidence>
<evidence type="ECO:0000269" key="3">
    <source>
    </source>
</evidence>
<evidence type="ECO:0000303" key="4">
    <source>
    </source>
</evidence>
<evidence type="ECO:0000305" key="5"/>
<evidence type="ECO:0000312" key="6">
    <source>
        <dbReference type="FlyBase" id="FBgn0010113"/>
    </source>
</evidence>
<accession>Q9N2M8</accession>
<accession>Q24480</accession>
<accession>Q95SY2</accession>
<accession>Q9VA84</accession>